<comment type="function">
    <text evidence="1">Catalyzes the ATP-dependent amination of UTP to CTP with either L-glutamine or ammonia as the source of nitrogen. Regulates intracellular CTP levels through interactions with the four ribonucleotide triphosphates.</text>
</comment>
<comment type="catalytic activity">
    <reaction evidence="1">
        <text>UTP + L-glutamine + ATP + H2O = CTP + L-glutamate + ADP + phosphate + 2 H(+)</text>
        <dbReference type="Rhea" id="RHEA:26426"/>
        <dbReference type="ChEBI" id="CHEBI:15377"/>
        <dbReference type="ChEBI" id="CHEBI:15378"/>
        <dbReference type="ChEBI" id="CHEBI:29985"/>
        <dbReference type="ChEBI" id="CHEBI:30616"/>
        <dbReference type="ChEBI" id="CHEBI:37563"/>
        <dbReference type="ChEBI" id="CHEBI:43474"/>
        <dbReference type="ChEBI" id="CHEBI:46398"/>
        <dbReference type="ChEBI" id="CHEBI:58359"/>
        <dbReference type="ChEBI" id="CHEBI:456216"/>
        <dbReference type="EC" id="6.3.4.2"/>
    </reaction>
</comment>
<comment type="catalytic activity">
    <reaction evidence="1">
        <text>L-glutamine + H2O = L-glutamate + NH4(+)</text>
        <dbReference type="Rhea" id="RHEA:15889"/>
        <dbReference type="ChEBI" id="CHEBI:15377"/>
        <dbReference type="ChEBI" id="CHEBI:28938"/>
        <dbReference type="ChEBI" id="CHEBI:29985"/>
        <dbReference type="ChEBI" id="CHEBI:58359"/>
    </reaction>
</comment>
<comment type="catalytic activity">
    <reaction evidence="1">
        <text>UTP + NH4(+) + ATP = CTP + ADP + phosphate + 2 H(+)</text>
        <dbReference type="Rhea" id="RHEA:16597"/>
        <dbReference type="ChEBI" id="CHEBI:15378"/>
        <dbReference type="ChEBI" id="CHEBI:28938"/>
        <dbReference type="ChEBI" id="CHEBI:30616"/>
        <dbReference type="ChEBI" id="CHEBI:37563"/>
        <dbReference type="ChEBI" id="CHEBI:43474"/>
        <dbReference type="ChEBI" id="CHEBI:46398"/>
        <dbReference type="ChEBI" id="CHEBI:456216"/>
    </reaction>
</comment>
<comment type="activity regulation">
    <text evidence="1">Allosterically activated by GTP, when glutamine is the substrate; GTP has no effect on the reaction when ammonia is the substrate. The allosteric effector GTP functions by stabilizing the protein conformation that binds the tetrahedral intermediate(s) formed during glutamine hydrolysis. Inhibited by the product CTP, via allosteric rather than competitive inhibition.</text>
</comment>
<comment type="pathway">
    <text evidence="1">Pyrimidine metabolism; CTP biosynthesis via de novo pathway; CTP from UDP: step 2/2.</text>
</comment>
<comment type="subunit">
    <text evidence="1">Homotetramer.</text>
</comment>
<comment type="miscellaneous">
    <text evidence="1">CTPSs have evolved a hybrid strategy for distinguishing between UTP and CTP. The overlapping regions of the product feedback inhibitory and substrate sites recognize a common feature in both compounds, the triphosphate moiety. To differentiate isosteric substrate and product pyrimidine rings, an additional pocket far from the expected kinase/ligase catalytic site, specifically recognizes the cytosine and ribose portions of the product inhibitor.</text>
</comment>
<comment type="similarity">
    <text evidence="1">Belongs to the CTP synthase family.</text>
</comment>
<feature type="chain" id="PRO_0000266273" description="CTP synthase">
    <location>
        <begin position="1"/>
        <end position="534"/>
    </location>
</feature>
<feature type="domain" description="Glutamine amidotransferase type-1" evidence="1">
    <location>
        <begin position="289"/>
        <end position="530"/>
    </location>
</feature>
<feature type="region of interest" description="Amidoligase domain" evidence="1">
    <location>
        <begin position="1"/>
        <end position="265"/>
    </location>
</feature>
<feature type="active site" description="Nucleophile; for glutamine hydrolysis" evidence="1">
    <location>
        <position position="379"/>
    </location>
</feature>
<feature type="active site" evidence="1">
    <location>
        <position position="503"/>
    </location>
</feature>
<feature type="active site" evidence="1">
    <location>
        <position position="505"/>
    </location>
</feature>
<feature type="binding site" evidence="1">
    <location>
        <position position="12"/>
    </location>
    <ligand>
        <name>CTP</name>
        <dbReference type="ChEBI" id="CHEBI:37563"/>
        <note>allosteric inhibitor</note>
    </ligand>
</feature>
<feature type="binding site" evidence="1">
    <location>
        <position position="12"/>
    </location>
    <ligand>
        <name>UTP</name>
        <dbReference type="ChEBI" id="CHEBI:46398"/>
    </ligand>
</feature>
<feature type="binding site" evidence="1">
    <location>
        <begin position="13"/>
        <end position="18"/>
    </location>
    <ligand>
        <name>ATP</name>
        <dbReference type="ChEBI" id="CHEBI:30616"/>
    </ligand>
</feature>
<feature type="binding site" evidence="1">
    <location>
        <position position="53"/>
    </location>
    <ligand>
        <name>L-glutamine</name>
        <dbReference type="ChEBI" id="CHEBI:58359"/>
    </ligand>
</feature>
<feature type="binding site" evidence="1">
    <location>
        <position position="70"/>
    </location>
    <ligand>
        <name>ATP</name>
        <dbReference type="ChEBI" id="CHEBI:30616"/>
    </ligand>
</feature>
<feature type="binding site" evidence="1">
    <location>
        <position position="70"/>
    </location>
    <ligand>
        <name>Mg(2+)</name>
        <dbReference type="ChEBI" id="CHEBI:18420"/>
    </ligand>
</feature>
<feature type="binding site" evidence="1">
    <location>
        <position position="140"/>
    </location>
    <ligand>
        <name>Mg(2+)</name>
        <dbReference type="ChEBI" id="CHEBI:18420"/>
    </ligand>
</feature>
<feature type="binding site" evidence="1">
    <location>
        <begin position="147"/>
        <end position="149"/>
    </location>
    <ligand>
        <name>CTP</name>
        <dbReference type="ChEBI" id="CHEBI:37563"/>
        <note>allosteric inhibitor</note>
    </ligand>
</feature>
<feature type="binding site" evidence="1">
    <location>
        <begin position="186"/>
        <end position="191"/>
    </location>
    <ligand>
        <name>CTP</name>
        <dbReference type="ChEBI" id="CHEBI:37563"/>
        <note>allosteric inhibitor</note>
    </ligand>
</feature>
<feature type="binding site" evidence="1">
    <location>
        <begin position="186"/>
        <end position="191"/>
    </location>
    <ligand>
        <name>UTP</name>
        <dbReference type="ChEBI" id="CHEBI:46398"/>
    </ligand>
</feature>
<feature type="binding site" evidence="1">
    <location>
        <position position="222"/>
    </location>
    <ligand>
        <name>CTP</name>
        <dbReference type="ChEBI" id="CHEBI:37563"/>
        <note>allosteric inhibitor</note>
    </ligand>
</feature>
<feature type="binding site" evidence="1">
    <location>
        <position position="222"/>
    </location>
    <ligand>
        <name>UTP</name>
        <dbReference type="ChEBI" id="CHEBI:46398"/>
    </ligand>
</feature>
<feature type="binding site" evidence="1">
    <location>
        <position position="352"/>
    </location>
    <ligand>
        <name>L-glutamine</name>
        <dbReference type="ChEBI" id="CHEBI:58359"/>
    </ligand>
</feature>
<feature type="binding site" evidence="1">
    <location>
        <begin position="380"/>
        <end position="383"/>
    </location>
    <ligand>
        <name>L-glutamine</name>
        <dbReference type="ChEBI" id="CHEBI:58359"/>
    </ligand>
</feature>
<feature type="binding site" evidence="1">
    <location>
        <position position="403"/>
    </location>
    <ligand>
        <name>L-glutamine</name>
        <dbReference type="ChEBI" id="CHEBI:58359"/>
    </ligand>
</feature>
<feature type="binding site" evidence="1">
    <location>
        <position position="460"/>
    </location>
    <ligand>
        <name>L-glutamine</name>
        <dbReference type="ChEBI" id="CHEBI:58359"/>
    </ligand>
</feature>
<protein>
    <recommendedName>
        <fullName evidence="1">CTP synthase</fullName>
        <ecNumber evidence="1">6.3.4.2</ecNumber>
    </recommendedName>
    <alternativeName>
        <fullName evidence="1">Cytidine 5'-triphosphate synthase</fullName>
    </alternativeName>
    <alternativeName>
        <fullName evidence="1">Cytidine triphosphate synthetase</fullName>
        <shortName evidence="1">CTP synthetase</shortName>
        <shortName evidence="1">CTPS</shortName>
    </alternativeName>
    <alternativeName>
        <fullName evidence="1">UTP--ammonia ligase</fullName>
    </alternativeName>
</protein>
<gene>
    <name evidence="1" type="primary">pyrG</name>
    <name type="ordered locus">Mbur_1282</name>
</gene>
<accession>Q12WH5</accession>
<name>PYRG_METBU</name>
<keyword id="KW-0067">ATP-binding</keyword>
<keyword id="KW-0315">Glutamine amidotransferase</keyword>
<keyword id="KW-0436">Ligase</keyword>
<keyword id="KW-0460">Magnesium</keyword>
<keyword id="KW-0479">Metal-binding</keyword>
<keyword id="KW-0547">Nucleotide-binding</keyword>
<keyword id="KW-0665">Pyrimidine biosynthesis</keyword>
<reference key="1">
    <citation type="journal article" date="2009" name="ISME J.">
        <title>The genome sequence of the psychrophilic archaeon, Methanococcoides burtonii: the role of genome evolution in cold adaptation.</title>
        <authorList>
            <person name="Allen M.A."/>
            <person name="Lauro F.M."/>
            <person name="Williams T.J."/>
            <person name="Burg D."/>
            <person name="Siddiqui K.S."/>
            <person name="De Francisci D."/>
            <person name="Chong K.W."/>
            <person name="Pilak O."/>
            <person name="Chew H.H."/>
            <person name="De Maere M.Z."/>
            <person name="Ting L."/>
            <person name="Katrib M."/>
            <person name="Ng C."/>
            <person name="Sowers K.R."/>
            <person name="Galperin M.Y."/>
            <person name="Anderson I.J."/>
            <person name="Ivanova N."/>
            <person name="Dalin E."/>
            <person name="Martinez M."/>
            <person name="Lapidus A."/>
            <person name="Hauser L."/>
            <person name="Land M."/>
            <person name="Thomas T."/>
            <person name="Cavicchioli R."/>
        </authorList>
    </citation>
    <scope>NUCLEOTIDE SEQUENCE [LARGE SCALE GENOMIC DNA]</scope>
    <source>
        <strain>DSM 6242 / NBRC 107633 / OCM 468 / ACE-M</strain>
    </source>
</reference>
<proteinExistence type="inferred from homology"/>
<dbReference type="EC" id="6.3.4.2" evidence="1"/>
<dbReference type="EMBL" id="CP000300">
    <property type="protein sequence ID" value="ABE52201.1"/>
    <property type="molecule type" value="Genomic_DNA"/>
</dbReference>
<dbReference type="RefSeq" id="WP_011499346.1">
    <property type="nucleotide sequence ID" value="NC_007955.1"/>
</dbReference>
<dbReference type="SMR" id="Q12WH5"/>
<dbReference type="STRING" id="259564.Mbur_1282"/>
<dbReference type="MEROPS" id="C26.964"/>
<dbReference type="GeneID" id="3998306"/>
<dbReference type="KEGG" id="mbu:Mbur_1282"/>
<dbReference type="HOGENOM" id="CLU_011675_5_0_2"/>
<dbReference type="OrthoDB" id="52769at2157"/>
<dbReference type="UniPathway" id="UPA00159">
    <property type="reaction ID" value="UER00277"/>
</dbReference>
<dbReference type="Proteomes" id="UP000001979">
    <property type="component" value="Chromosome"/>
</dbReference>
<dbReference type="GO" id="GO:0005524">
    <property type="term" value="F:ATP binding"/>
    <property type="evidence" value="ECO:0007669"/>
    <property type="project" value="UniProtKB-KW"/>
</dbReference>
<dbReference type="GO" id="GO:0003883">
    <property type="term" value="F:CTP synthase activity"/>
    <property type="evidence" value="ECO:0007669"/>
    <property type="project" value="UniProtKB-UniRule"/>
</dbReference>
<dbReference type="GO" id="GO:0004359">
    <property type="term" value="F:glutaminase activity"/>
    <property type="evidence" value="ECO:0007669"/>
    <property type="project" value="RHEA"/>
</dbReference>
<dbReference type="GO" id="GO:0042802">
    <property type="term" value="F:identical protein binding"/>
    <property type="evidence" value="ECO:0007669"/>
    <property type="project" value="TreeGrafter"/>
</dbReference>
<dbReference type="GO" id="GO:0046872">
    <property type="term" value="F:metal ion binding"/>
    <property type="evidence" value="ECO:0007669"/>
    <property type="project" value="UniProtKB-KW"/>
</dbReference>
<dbReference type="GO" id="GO:0044210">
    <property type="term" value="P:'de novo' CTP biosynthetic process"/>
    <property type="evidence" value="ECO:0007669"/>
    <property type="project" value="UniProtKB-UniRule"/>
</dbReference>
<dbReference type="GO" id="GO:0019856">
    <property type="term" value="P:pyrimidine nucleobase biosynthetic process"/>
    <property type="evidence" value="ECO:0007669"/>
    <property type="project" value="TreeGrafter"/>
</dbReference>
<dbReference type="CDD" id="cd03113">
    <property type="entry name" value="CTPS_N"/>
    <property type="match status" value="1"/>
</dbReference>
<dbReference type="CDD" id="cd01746">
    <property type="entry name" value="GATase1_CTP_Synthase"/>
    <property type="match status" value="1"/>
</dbReference>
<dbReference type="FunFam" id="3.40.50.300:FF:000009">
    <property type="entry name" value="CTP synthase"/>
    <property type="match status" value="1"/>
</dbReference>
<dbReference type="FunFam" id="3.40.50.880:FF:000002">
    <property type="entry name" value="CTP synthase"/>
    <property type="match status" value="1"/>
</dbReference>
<dbReference type="Gene3D" id="3.40.50.880">
    <property type="match status" value="1"/>
</dbReference>
<dbReference type="Gene3D" id="3.40.50.300">
    <property type="entry name" value="P-loop containing nucleotide triphosphate hydrolases"/>
    <property type="match status" value="1"/>
</dbReference>
<dbReference type="HAMAP" id="MF_01227">
    <property type="entry name" value="PyrG"/>
    <property type="match status" value="1"/>
</dbReference>
<dbReference type="InterPro" id="IPR029062">
    <property type="entry name" value="Class_I_gatase-like"/>
</dbReference>
<dbReference type="InterPro" id="IPR004468">
    <property type="entry name" value="CTP_synthase"/>
</dbReference>
<dbReference type="InterPro" id="IPR017456">
    <property type="entry name" value="CTP_synthase_N"/>
</dbReference>
<dbReference type="InterPro" id="IPR017926">
    <property type="entry name" value="GATASE"/>
</dbReference>
<dbReference type="InterPro" id="IPR033828">
    <property type="entry name" value="GATase1_CTP_Synthase"/>
</dbReference>
<dbReference type="InterPro" id="IPR027417">
    <property type="entry name" value="P-loop_NTPase"/>
</dbReference>
<dbReference type="NCBIfam" id="NF003792">
    <property type="entry name" value="PRK05380.1"/>
    <property type="match status" value="1"/>
</dbReference>
<dbReference type="NCBIfam" id="TIGR00337">
    <property type="entry name" value="PyrG"/>
    <property type="match status" value="1"/>
</dbReference>
<dbReference type="PANTHER" id="PTHR11550">
    <property type="entry name" value="CTP SYNTHASE"/>
    <property type="match status" value="1"/>
</dbReference>
<dbReference type="PANTHER" id="PTHR11550:SF0">
    <property type="entry name" value="CTP SYNTHASE-RELATED"/>
    <property type="match status" value="1"/>
</dbReference>
<dbReference type="Pfam" id="PF06418">
    <property type="entry name" value="CTP_synth_N"/>
    <property type="match status" value="1"/>
</dbReference>
<dbReference type="Pfam" id="PF00117">
    <property type="entry name" value="GATase"/>
    <property type="match status" value="1"/>
</dbReference>
<dbReference type="SUPFAM" id="SSF52317">
    <property type="entry name" value="Class I glutamine amidotransferase-like"/>
    <property type="match status" value="1"/>
</dbReference>
<dbReference type="SUPFAM" id="SSF52540">
    <property type="entry name" value="P-loop containing nucleoside triphosphate hydrolases"/>
    <property type="match status" value="1"/>
</dbReference>
<dbReference type="PROSITE" id="PS51273">
    <property type="entry name" value="GATASE_TYPE_1"/>
    <property type="match status" value="1"/>
</dbReference>
<organism>
    <name type="scientific">Methanococcoides burtonii (strain DSM 6242 / NBRC 107633 / OCM 468 / ACE-M)</name>
    <dbReference type="NCBI Taxonomy" id="259564"/>
    <lineage>
        <taxon>Archaea</taxon>
        <taxon>Methanobacteriati</taxon>
        <taxon>Methanobacteriota</taxon>
        <taxon>Stenosarchaea group</taxon>
        <taxon>Methanomicrobia</taxon>
        <taxon>Methanosarcinales</taxon>
        <taxon>Methanosarcinaceae</taxon>
        <taxon>Methanococcoides</taxon>
    </lineage>
</organism>
<sequence>MKYIIVTGGVMSGLGKGITTASVGRNLKNKGYKVTAIKIDPYINIDAGTMSPYQHGEVYVLKDGGEVDLDLGNYERFLDTELTRDHNLTTGKIYQTVIDKERKGEYLGKTVQIIPHITNEIKDRIRRIAAKSGADVCLIEVGGTVGDIESMPFLEAVRQMYREESPENIALLHVTLVPIDSQGDQKTKPTQHSVKELRELGLTPHVIVSRCKKALMESTRSKIALFCDVPVEAVISAHDSADIYEVPLQLENEGLSNYLLKKLILKSTLEDTNWEEMVIRMNNCTGNVNVAIVGKYTHLEDSYISIVESLKHGAIEIGCKFEITWFDAESFDDDPSEVEKLNGFDGILVPGGFGERGTEGKMLAIKYARENNIPYLGLCLGMQLAVIEFARNVVGLDGANSSEFDENTPYPVIDLLPEQEDVVDMGATMRLGDYEATLKAGSLAESIYGASLITERHRHRYEVNPNYVDRIEEHGMIFSGKNKNRMEIAEVPSKDFYFASQFHPEFKSRPGRPSPPFKAFMGAMLKKSKEKKDQ</sequence>
<evidence type="ECO:0000255" key="1">
    <source>
        <dbReference type="HAMAP-Rule" id="MF_01227"/>
    </source>
</evidence>